<gene>
    <name evidence="1" type="primary">rplM</name>
    <name type="ordered locus">RL1673</name>
</gene>
<keyword id="KW-0687">Ribonucleoprotein</keyword>
<keyword id="KW-0689">Ribosomal protein</keyword>
<organism>
    <name type="scientific">Rhizobium johnstonii (strain DSM 114642 / LMG 32736 / 3841)</name>
    <name type="common">Rhizobium leguminosarum bv. viciae</name>
    <dbReference type="NCBI Taxonomy" id="216596"/>
    <lineage>
        <taxon>Bacteria</taxon>
        <taxon>Pseudomonadati</taxon>
        <taxon>Pseudomonadota</taxon>
        <taxon>Alphaproteobacteria</taxon>
        <taxon>Hyphomicrobiales</taxon>
        <taxon>Rhizobiaceae</taxon>
        <taxon>Rhizobium/Agrobacterium group</taxon>
        <taxon>Rhizobium</taxon>
        <taxon>Rhizobium johnstonii</taxon>
    </lineage>
</organism>
<name>RL13_RHIJ3</name>
<sequence>MATFSQKPAEVEKKWVIIDAEGLVVGRLASIIAMRLRGKHKATFTPHVDDGDNVIVINAEKVVFTGKKYSDKVYYWHTGYAGGIKERSARQIIEGRFPERVLEKAVERMVPRGPLGRRQMKNLRVYAGSNHPHEAQQPVALDVAALNKKNVRSA</sequence>
<reference key="1">
    <citation type="journal article" date="2006" name="Genome Biol.">
        <title>The genome of Rhizobium leguminosarum has recognizable core and accessory components.</title>
        <authorList>
            <person name="Young J.P.W."/>
            <person name="Crossman L.C."/>
            <person name="Johnston A.W.B."/>
            <person name="Thomson N.R."/>
            <person name="Ghazoui Z.F."/>
            <person name="Hull K.H."/>
            <person name="Wexler M."/>
            <person name="Curson A.R.J."/>
            <person name="Todd J.D."/>
            <person name="Poole P.S."/>
            <person name="Mauchline T.H."/>
            <person name="East A.K."/>
            <person name="Quail M.A."/>
            <person name="Churcher C."/>
            <person name="Arrowsmith C."/>
            <person name="Cherevach I."/>
            <person name="Chillingworth T."/>
            <person name="Clarke K."/>
            <person name="Cronin A."/>
            <person name="Davis P."/>
            <person name="Fraser A."/>
            <person name="Hance Z."/>
            <person name="Hauser H."/>
            <person name="Jagels K."/>
            <person name="Moule S."/>
            <person name="Mungall K."/>
            <person name="Norbertczak H."/>
            <person name="Rabbinowitsch E."/>
            <person name="Sanders M."/>
            <person name="Simmonds M."/>
            <person name="Whitehead S."/>
            <person name="Parkhill J."/>
        </authorList>
    </citation>
    <scope>NUCLEOTIDE SEQUENCE [LARGE SCALE GENOMIC DNA]</scope>
    <source>
        <strain>DSM 114642 / LMG 32736 / 3841</strain>
    </source>
</reference>
<proteinExistence type="inferred from homology"/>
<feature type="chain" id="PRO_0000261782" description="Large ribosomal subunit protein uL13">
    <location>
        <begin position="1"/>
        <end position="154"/>
    </location>
</feature>
<protein>
    <recommendedName>
        <fullName evidence="1">Large ribosomal subunit protein uL13</fullName>
    </recommendedName>
    <alternativeName>
        <fullName evidence="2">50S ribosomal protein L13</fullName>
    </alternativeName>
</protein>
<evidence type="ECO:0000255" key="1">
    <source>
        <dbReference type="HAMAP-Rule" id="MF_01366"/>
    </source>
</evidence>
<evidence type="ECO:0000305" key="2"/>
<dbReference type="EMBL" id="AM236080">
    <property type="protein sequence ID" value="CAK07168.1"/>
    <property type="molecule type" value="Genomic_DNA"/>
</dbReference>
<dbReference type="RefSeq" id="WP_003558420.1">
    <property type="nucleotide sequence ID" value="NC_008380.1"/>
</dbReference>
<dbReference type="SMR" id="Q1MIP2"/>
<dbReference type="EnsemblBacteria" id="CAK07168">
    <property type="protein sequence ID" value="CAK07168"/>
    <property type="gene ID" value="RL1673"/>
</dbReference>
<dbReference type="GeneID" id="67484861"/>
<dbReference type="KEGG" id="rle:RL1673"/>
<dbReference type="eggNOG" id="COG0102">
    <property type="taxonomic scope" value="Bacteria"/>
</dbReference>
<dbReference type="HOGENOM" id="CLU_082184_2_0_5"/>
<dbReference type="Proteomes" id="UP000006575">
    <property type="component" value="Chromosome"/>
</dbReference>
<dbReference type="GO" id="GO:0022625">
    <property type="term" value="C:cytosolic large ribosomal subunit"/>
    <property type="evidence" value="ECO:0007669"/>
    <property type="project" value="TreeGrafter"/>
</dbReference>
<dbReference type="GO" id="GO:0003729">
    <property type="term" value="F:mRNA binding"/>
    <property type="evidence" value="ECO:0007669"/>
    <property type="project" value="TreeGrafter"/>
</dbReference>
<dbReference type="GO" id="GO:0003735">
    <property type="term" value="F:structural constituent of ribosome"/>
    <property type="evidence" value="ECO:0007669"/>
    <property type="project" value="InterPro"/>
</dbReference>
<dbReference type="GO" id="GO:0017148">
    <property type="term" value="P:negative regulation of translation"/>
    <property type="evidence" value="ECO:0007669"/>
    <property type="project" value="TreeGrafter"/>
</dbReference>
<dbReference type="GO" id="GO:0006412">
    <property type="term" value="P:translation"/>
    <property type="evidence" value="ECO:0007669"/>
    <property type="project" value="UniProtKB-UniRule"/>
</dbReference>
<dbReference type="CDD" id="cd00392">
    <property type="entry name" value="Ribosomal_L13"/>
    <property type="match status" value="1"/>
</dbReference>
<dbReference type="FunFam" id="3.90.1180.10:FF:000001">
    <property type="entry name" value="50S ribosomal protein L13"/>
    <property type="match status" value="1"/>
</dbReference>
<dbReference type="Gene3D" id="3.90.1180.10">
    <property type="entry name" value="Ribosomal protein L13"/>
    <property type="match status" value="1"/>
</dbReference>
<dbReference type="HAMAP" id="MF_01366">
    <property type="entry name" value="Ribosomal_uL13"/>
    <property type="match status" value="1"/>
</dbReference>
<dbReference type="InterPro" id="IPR005822">
    <property type="entry name" value="Ribosomal_uL13"/>
</dbReference>
<dbReference type="InterPro" id="IPR005823">
    <property type="entry name" value="Ribosomal_uL13_bac-type"/>
</dbReference>
<dbReference type="InterPro" id="IPR036899">
    <property type="entry name" value="Ribosomal_uL13_sf"/>
</dbReference>
<dbReference type="NCBIfam" id="TIGR01066">
    <property type="entry name" value="rplM_bact"/>
    <property type="match status" value="1"/>
</dbReference>
<dbReference type="PANTHER" id="PTHR11545:SF2">
    <property type="entry name" value="LARGE RIBOSOMAL SUBUNIT PROTEIN UL13M"/>
    <property type="match status" value="1"/>
</dbReference>
<dbReference type="PANTHER" id="PTHR11545">
    <property type="entry name" value="RIBOSOMAL PROTEIN L13"/>
    <property type="match status" value="1"/>
</dbReference>
<dbReference type="Pfam" id="PF00572">
    <property type="entry name" value="Ribosomal_L13"/>
    <property type="match status" value="1"/>
</dbReference>
<dbReference type="PIRSF" id="PIRSF002181">
    <property type="entry name" value="Ribosomal_L13"/>
    <property type="match status" value="1"/>
</dbReference>
<dbReference type="SUPFAM" id="SSF52161">
    <property type="entry name" value="Ribosomal protein L13"/>
    <property type="match status" value="1"/>
</dbReference>
<comment type="function">
    <text evidence="1">This protein is one of the early assembly proteins of the 50S ribosomal subunit, although it is not seen to bind rRNA by itself. It is important during the early stages of 50S assembly.</text>
</comment>
<comment type="subunit">
    <text evidence="1">Part of the 50S ribosomal subunit.</text>
</comment>
<comment type="similarity">
    <text evidence="1">Belongs to the universal ribosomal protein uL13 family.</text>
</comment>
<accession>Q1MIP2</accession>